<dbReference type="EMBL" id="CP000250">
    <property type="protein sequence ID" value="ABD07000.1"/>
    <property type="molecule type" value="Genomic_DNA"/>
</dbReference>
<dbReference type="RefSeq" id="WP_011441185.1">
    <property type="nucleotide sequence ID" value="NC_007778.1"/>
</dbReference>
<dbReference type="SMR" id="Q2IXR0"/>
<dbReference type="STRING" id="316058.RPB_2295"/>
<dbReference type="KEGG" id="rpb:RPB_2295"/>
<dbReference type="eggNOG" id="COG0087">
    <property type="taxonomic scope" value="Bacteria"/>
</dbReference>
<dbReference type="HOGENOM" id="CLU_044142_2_0_5"/>
<dbReference type="OrthoDB" id="9806135at2"/>
<dbReference type="Proteomes" id="UP000008809">
    <property type="component" value="Chromosome"/>
</dbReference>
<dbReference type="GO" id="GO:0022625">
    <property type="term" value="C:cytosolic large ribosomal subunit"/>
    <property type="evidence" value="ECO:0007669"/>
    <property type="project" value="TreeGrafter"/>
</dbReference>
<dbReference type="GO" id="GO:0019843">
    <property type="term" value="F:rRNA binding"/>
    <property type="evidence" value="ECO:0007669"/>
    <property type="project" value="UniProtKB-UniRule"/>
</dbReference>
<dbReference type="GO" id="GO:0003735">
    <property type="term" value="F:structural constituent of ribosome"/>
    <property type="evidence" value="ECO:0007669"/>
    <property type="project" value="InterPro"/>
</dbReference>
<dbReference type="GO" id="GO:0006412">
    <property type="term" value="P:translation"/>
    <property type="evidence" value="ECO:0007669"/>
    <property type="project" value="UniProtKB-UniRule"/>
</dbReference>
<dbReference type="FunFam" id="2.40.30.10:FF:000004">
    <property type="entry name" value="50S ribosomal protein L3"/>
    <property type="match status" value="1"/>
</dbReference>
<dbReference type="FunFam" id="3.30.160.810:FF:000001">
    <property type="entry name" value="50S ribosomal protein L3"/>
    <property type="match status" value="1"/>
</dbReference>
<dbReference type="Gene3D" id="3.30.160.810">
    <property type="match status" value="1"/>
</dbReference>
<dbReference type="Gene3D" id="2.40.30.10">
    <property type="entry name" value="Translation factors"/>
    <property type="match status" value="1"/>
</dbReference>
<dbReference type="HAMAP" id="MF_01325_B">
    <property type="entry name" value="Ribosomal_uL3_B"/>
    <property type="match status" value="1"/>
</dbReference>
<dbReference type="InterPro" id="IPR000597">
    <property type="entry name" value="Ribosomal_uL3"/>
</dbReference>
<dbReference type="InterPro" id="IPR019927">
    <property type="entry name" value="Ribosomal_uL3_bac/org-type"/>
</dbReference>
<dbReference type="InterPro" id="IPR019926">
    <property type="entry name" value="Ribosomal_uL3_CS"/>
</dbReference>
<dbReference type="InterPro" id="IPR009000">
    <property type="entry name" value="Transl_B-barrel_sf"/>
</dbReference>
<dbReference type="NCBIfam" id="TIGR03625">
    <property type="entry name" value="L3_bact"/>
    <property type="match status" value="1"/>
</dbReference>
<dbReference type="PANTHER" id="PTHR11229">
    <property type="entry name" value="50S RIBOSOMAL PROTEIN L3"/>
    <property type="match status" value="1"/>
</dbReference>
<dbReference type="PANTHER" id="PTHR11229:SF16">
    <property type="entry name" value="LARGE RIBOSOMAL SUBUNIT PROTEIN UL3C"/>
    <property type="match status" value="1"/>
</dbReference>
<dbReference type="Pfam" id="PF00297">
    <property type="entry name" value="Ribosomal_L3"/>
    <property type="match status" value="1"/>
</dbReference>
<dbReference type="SUPFAM" id="SSF50447">
    <property type="entry name" value="Translation proteins"/>
    <property type="match status" value="1"/>
</dbReference>
<dbReference type="PROSITE" id="PS00474">
    <property type="entry name" value="RIBOSOMAL_L3"/>
    <property type="match status" value="1"/>
</dbReference>
<protein>
    <recommendedName>
        <fullName evidence="1">Large ribosomal subunit protein uL3</fullName>
    </recommendedName>
    <alternativeName>
        <fullName evidence="3">50S ribosomal protein L3</fullName>
    </alternativeName>
</protein>
<proteinExistence type="inferred from homology"/>
<comment type="function">
    <text evidence="1">One of the primary rRNA binding proteins, it binds directly near the 3'-end of the 23S rRNA, where it nucleates assembly of the 50S subunit.</text>
</comment>
<comment type="subunit">
    <text evidence="1">Part of the 50S ribosomal subunit. Forms a cluster with proteins L14 and L19.</text>
</comment>
<comment type="PTM">
    <text evidence="1">Methylated by PrmB.</text>
</comment>
<comment type="similarity">
    <text evidence="1">Belongs to the universal ribosomal protein uL3 family.</text>
</comment>
<accession>Q2IXR0</accession>
<feature type="chain" id="PRO_0000241400" description="Large ribosomal subunit protein uL3">
    <location>
        <begin position="1"/>
        <end position="241"/>
    </location>
</feature>
<feature type="region of interest" description="Disordered" evidence="2">
    <location>
        <begin position="139"/>
        <end position="164"/>
    </location>
</feature>
<feature type="region of interest" description="Disordered" evidence="2">
    <location>
        <begin position="215"/>
        <end position="241"/>
    </location>
</feature>
<feature type="compositionally biased region" description="Low complexity" evidence="2">
    <location>
        <begin position="225"/>
        <end position="241"/>
    </location>
</feature>
<feature type="modified residue" description="N5-methylglutamine" evidence="1">
    <location>
        <position position="151"/>
    </location>
</feature>
<reference key="1">
    <citation type="submission" date="2006-01" db="EMBL/GenBank/DDBJ databases">
        <title>Complete sequence of Rhodopseudomonas palustris HaA2.</title>
        <authorList>
            <consortium name="US DOE Joint Genome Institute"/>
            <person name="Copeland A."/>
            <person name="Lucas S."/>
            <person name="Lapidus A."/>
            <person name="Barry K."/>
            <person name="Detter J.C."/>
            <person name="Glavina T."/>
            <person name="Hammon N."/>
            <person name="Israni S."/>
            <person name="Pitluck S."/>
            <person name="Chain P."/>
            <person name="Malfatti S."/>
            <person name="Shin M."/>
            <person name="Vergez L."/>
            <person name="Schmutz J."/>
            <person name="Larimer F."/>
            <person name="Land M."/>
            <person name="Hauser L."/>
            <person name="Pelletier D.A."/>
            <person name="Kyrpides N."/>
            <person name="Anderson I."/>
            <person name="Oda Y."/>
            <person name="Harwood C.S."/>
            <person name="Richardson P."/>
        </authorList>
    </citation>
    <scope>NUCLEOTIDE SEQUENCE [LARGE SCALE GENOMIC DNA]</scope>
    <source>
        <strain>HaA2</strain>
    </source>
</reference>
<organism>
    <name type="scientific">Rhodopseudomonas palustris (strain HaA2)</name>
    <dbReference type="NCBI Taxonomy" id="316058"/>
    <lineage>
        <taxon>Bacteria</taxon>
        <taxon>Pseudomonadati</taxon>
        <taxon>Pseudomonadota</taxon>
        <taxon>Alphaproteobacteria</taxon>
        <taxon>Hyphomicrobiales</taxon>
        <taxon>Nitrobacteraceae</taxon>
        <taxon>Rhodopseudomonas</taxon>
    </lineage>
</organism>
<evidence type="ECO:0000255" key="1">
    <source>
        <dbReference type="HAMAP-Rule" id="MF_01325"/>
    </source>
</evidence>
<evidence type="ECO:0000256" key="2">
    <source>
        <dbReference type="SAM" id="MobiDB-lite"/>
    </source>
</evidence>
<evidence type="ECO:0000305" key="3"/>
<gene>
    <name evidence="1" type="primary">rplC</name>
    <name type="ordered locus">RPB_2295</name>
</gene>
<keyword id="KW-0488">Methylation</keyword>
<keyword id="KW-1185">Reference proteome</keyword>
<keyword id="KW-0687">Ribonucleoprotein</keyword>
<keyword id="KW-0689">Ribosomal protein</keyword>
<keyword id="KW-0694">RNA-binding</keyword>
<keyword id="KW-0699">rRNA-binding</keyword>
<name>RL3_RHOP2</name>
<sequence length="241" mass="25562">MRSGVIAQKVGMTRVFTETGEHIPVTVLKLGNCQVLAHRTTEKNGYVALQLGSGARKTVYMPKAERGQFAVAKVEPKRKVAEFRVSEDALIPVGAEIQADHFVVGQFVDVTGTSVGKGFAGGMKRWNFGGLRATHGVSVSHRSIGSTGGRQDPGKTFKNKKMPGHMGVDRITTLNLRVVQLDVERGLILVEGAVPGSKGGWISVRDAVKKALPADAPKPGKFRLANGGEEAAAPAAEQEGV</sequence>